<keyword id="KW-0028">Amino-acid biosynthesis</keyword>
<keyword id="KW-0057">Aromatic amino acid biosynthesis</keyword>
<keyword id="KW-0210">Decarboxylase</keyword>
<keyword id="KW-0456">Lyase</keyword>
<keyword id="KW-1185">Reference proteome</keyword>
<keyword id="KW-0822">Tryptophan biosynthesis</keyword>
<evidence type="ECO:0000305" key="1"/>
<organism>
    <name type="scientific">Mycobacterium tuberculosis (strain CDC 1551 / Oshkosh)</name>
    <dbReference type="NCBI Taxonomy" id="83331"/>
    <lineage>
        <taxon>Bacteria</taxon>
        <taxon>Bacillati</taxon>
        <taxon>Actinomycetota</taxon>
        <taxon>Actinomycetes</taxon>
        <taxon>Mycobacteriales</taxon>
        <taxon>Mycobacteriaceae</taxon>
        <taxon>Mycobacterium</taxon>
        <taxon>Mycobacterium tuberculosis complex</taxon>
    </lineage>
</organism>
<protein>
    <recommendedName>
        <fullName>Indole-3-glycerol phosphate synthase</fullName>
        <shortName>IGPS</shortName>
        <ecNumber>4.1.1.48</ecNumber>
    </recommendedName>
</protein>
<proteinExistence type="inferred from homology"/>
<gene>
    <name type="primary">trpC</name>
    <name type="ordered locus">MT1646</name>
</gene>
<accession>P9WFX6</accession>
<accession>L0T8S6</accession>
<accession>O06129</accession>
<accession>P0A632</accession>
<feature type="chain" id="PRO_0000428460" description="Indole-3-glycerol phosphate synthase">
    <location>
        <begin position="1"/>
        <end position="272"/>
    </location>
</feature>
<comment type="catalytic activity">
    <reaction>
        <text>1-(2-carboxyphenylamino)-1-deoxy-D-ribulose 5-phosphate + H(+) = (1S,2R)-1-C-(indol-3-yl)glycerol 3-phosphate + CO2 + H2O</text>
        <dbReference type="Rhea" id="RHEA:23476"/>
        <dbReference type="ChEBI" id="CHEBI:15377"/>
        <dbReference type="ChEBI" id="CHEBI:15378"/>
        <dbReference type="ChEBI" id="CHEBI:16526"/>
        <dbReference type="ChEBI" id="CHEBI:58613"/>
        <dbReference type="ChEBI" id="CHEBI:58866"/>
        <dbReference type="EC" id="4.1.1.48"/>
    </reaction>
</comment>
<comment type="pathway">
    <text>Amino-acid biosynthesis; L-tryptophan biosynthesis; L-tryptophan from chorismate: step 4/5.</text>
</comment>
<comment type="similarity">
    <text evidence="1">Belongs to the TrpC family.</text>
</comment>
<comment type="sequence caution" evidence="1">
    <conflict type="erroneous initiation">
        <sequence resource="EMBL-CDS" id="AAK45915"/>
    </conflict>
</comment>
<reference key="1">
    <citation type="journal article" date="2002" name="J. Bacteriol.">
        <title>Whole-genome comparison of Mycobacterium tuberculosis clinical and laboratory strains.</title>
        <authorList>
            <person name="Fleischmann R.D."/>
            <person name="Alland D."/>
            <person name="Eisen J.A."/>
            <person name="Carpenter L."/>
            <person name="White O."/>
            <person name="Peterson J.D."/>
            <person name="DeBoy R.T."/>
            <person name="Dodson R.J."/>
            <person name="Gwinn M.L."/>
            <person name="Haft D.H."/>
            <person name="Hickey E.K."/>
            <person name="Kolonay J.F."/>
            <person name="Nelson W.C."/>
            <person name="Umayam L.A."/>
            <person name="Ermolaeva M.D."/>
            <person name="Salzberg S.L."/>
            <person name="Delcher A."/>
            <person name="Utterback T.R."/>
            <person name="Weidman J.F."/>
            <person name="Khouri H.M."/>
            <person name="Gill J."/>
            <person name="Mikula A."/>
            <person name="Bishai W."/>
            <person name="Jacobs W.R. Jr."/>
            <person name="Venter J.C."/>
            <person name="Fraser C.M."/>
        </authorList>
    </citation>
    <scope>NUCLEOTIDE SEQUENCE [LARGE SCALE GENOMIC DNA]</scope>
    <source>
        <strain>CDC 1551 / Oshkosh</strain>
    </source>
</reference>
<name>TRPC_MYCTO</name>
<sequence length="272" mass="28035">MSPATVLDSILEGVRADVAAREASVSLSEIKAAAAAAPPPLDVMAALREPGIGVIAEVKRASPSAGALATIADPAKLAQAYQDGGARIVSVVTEQRRFQGSLDDLDAVRASVSIPVLRKDFVVQPYQIHEARAHGADMLLLIVAALEQSVLVSMLDRTESLGMIALVEVHTEQEADRALKAGAKVIGVNARDLMTLDVDRDCFARIAPGLPSSVIRIAESGVRGTADLLAYAGAGADAVLVGEGLVTSGDPRAAVADLVTAGTHPSCPKPAR</sequence>
<dbReference type="EC" id="4.1.1.48"/>
<dbReference type="EMBL" id="AE000516">
    <property type="protein sequence ID" value="AAK45915.1"/>
    <property type="status" value="ALT_INIT"/>
    <property type="molecule type" value="Genomic_DNA"/>
</dbReference>
<dbReference type="PIR" id="A70557">
    <property type="entry name" value="A70557"/>
</dbReference>
<dbReference type="RefSeq" id="WP_003917500.1">
    <property type="nucleotide sequence ID" value="NC_002755.2"/>
</dbReference>
<dbReference type="SMR" id="P9WFX6"/>
<dbReference type="KEGG" id="mtc:MT1646"/>
<dbReference type="PATRIC" id="fig|83331.31.peg.1769"/>
<dbReference type="HOGENOM" id="CLU_034247_0_0_11"/>
<dbReference type="UniPathway" id="UPA00035">
    <property type="reaction ID" value="UER00043"/>
</dbReference>
<dbReference type="Proteomes" id="UP000001020">
    <property type="component" value="Chromosome"/>
</dbReference>
<dbReference type="GO" id="GO:0004425">
    <property type="term" value="F:indole-3-glycerol-phosphate synthase activity"/>
    <property type="evidence" value="ECO:0007669"/>
    <property type="project" value="UniProtKB-UniRule"/>
</dbReference>
<dbReference type="GO" id="GO:0004640">
    <property type="term" value="F:phosphoribosylanthranilate isomerase activity"/>
    <property type="evidence" value="ECO:0007669"/>
    <property type="project" value="TreeGrafter"/>
</dbReference>
<dbReference type="GO" id="GO:0000162">
    <property type="term" value="P:L-tryptophan biosynthetic process"/>
    <property type="evidence" value="ECO:0007669"/>
    <property type="project" value="UniProtKB-UniRule"/>
</dbReference>
<dbReference type="CDD" id="cd00331">
    <property type="entry name" value="IGPS"/>
    <property type="match status" value="1"/>
</dbReference>
<dbReference type="FunFam" id="3.20.20.70:FF:000024">
    <property type="entry name" value="Indole-3-glycerol phosphate synthase"/>
    <property type="match status" value="1"/>
</dbReference>
<dbReference type="Gene3D" id="3.20.20.70">
    <property type="entry name" value="Aldolase class I"/>
    <property type="match status" value="1"/>
</dbReference>
<dbReference type="HAMAP" id="MF_00134_B">
    <property type="entry name" value="IGPS_B"/>
    <property type="match status" value="1"/>
</dbReference>
<dbReference type="InterPro" id="IPR013785">
    <property type="entry name" value="Aldolase_TIM"/>
</dbReference>
<dbReference type="InterPro" id="IPR045186">
    <property type="entry name" value="Indole-3-glycerol_P_synth"/>
</dbReference>
<dbReference type="InterPro" id="IPR013798">
    <property type="entry name" value="Indole-3-glycerol_P_synth_dom"/>
</dbReference>
<dbReference type="InterPro" id="IPR001468">
    <property type="entry name" value="Indole-3-GlycerolPSynthase_CS"/>
</dbReference>
<dbReference type="InterPro" id="IPR011060">
    <property type="entry name" value="RibuloseP-bd_barrel"/>
</dbReference>
<dbReference type="NCBIfam" id="NF001369">
    <property type="entry name" value="PRK00278.1-1"/>
    <property type="match status" value="1"/>
</dbReference>
<dbReference type="NCBIfam" id="NF001377">
    <property type="entry name" value="PRK00278.2-4"/>
    <property type="match status" value="1"/>
</dbReference>
<dbReference type="PANTHER" id="PTHR22854:SF2">
    <property type="entry name" value="INDOLE-3-GLYCEROL-PHOSPHATE SYNTHASE"/>
    <property type="match status" value="1"/>
</dbReference>
<dbReference type="PANTHER" id="PTHR22854">
    <property type="entry name" value="TRYPTOPHAN BIOSYNTHESIS PROTEIN"/>
    <property type="match status" value="1"/>
</dbReference>
<dbReference type="Pfam" id="PF00218">
    <property type="entry name" value="IGPS"/>
    <property type="match status" value="1"/>
</dbReference>
<dbReference type="SUPFAM" id="SSF51366">
    <property type="entry name" value="Ribulose-phoshate binding barrel"/>
    <property type="match status" value="1"/>
</dbReference>
<dbReference type="PROSITE" id="PS00614">
    <property type="entry name" value="IGPS"/>
    <property type="match status" value="1"/>
</dbReference>